<comment type="subcellular location">
    <subcellularLocation>
        <location evidence="1">Cytoplasm</location>
    </subcellularLocation>
</comment>
<comment type="similarity">
    <text evidence="1">Belongs to the TACO1 family.</text>
</comment>
<accession>B0SJP0</accession>
<keyword id="KW-0963">Cytoplasm</keyword>
<keyword id="KW-0238">DNA-binding</keyword>
<keyword id="KW-1185">Reference proteome</keyword>
<keyword id="KW-0804">Transcription</keyword>
<keyword id="KW-0805">Transcription regulation</keyword>
<proteinExistence type="inferred from homology"/>
<organism>
    <name type="scientific">Leptospira biflexa serovar Patoc (strain Patoc 1 / ATCC 23582 / Paris)</name>
    <dbReference type="NCBI Taxonomy" id="456481"/>
    <lineage>
        <taxon>Bacteria</taxon>
        <taxon>Pseudomonadati</taxon>
        <taxon>Spirochaetota</taxon>
        <taxon>Spirochaetia</taxon>
        <taxon>Leptospirales</taxon>
        <taxon>Leptospiraceae</taxon>
        <taxon>Leptospira</taxon>
    </lineage>
</organism>
<sequence>MSGHSKWATIRRKKGAIDAKRGAIFTRIAKEISVAAKEGGGDQEGNPRLRLAVTKAKAANMPKDNIERAIKKGTGGLEGMVYEECLYECYAPGGVAIMVDVLTDKKSRTTPEIKSILTKLGGSLANAGAVSRLFERKGQLTLKADQISEEALFDLALGAGAEDIQVNDGMYVVLTSPSEYEAVQSALSSKGLNMEESEIKYIPMTTVEVNEKETAEKVMKLIENLEANDDVQGVSSNFELGEGVELD</sequence>
<gene>
    <name type="ordered locus">LEPBI_I0056</name>
</gene>
<protein>
    <recommendedName>
        <fullName evidence="1">Probable transcriptional regulatory protein LEPBI_I0056</fullName>
    </recommendedName>
</protein>
<feature type="chain" id="PRO_1000132210" description="Probable transcriptional regulatory protein LEPBI_I0056">
    <location>
        <begin position="1"/>
        <end position="247"/>
    </location>
</feature>
<evidence type="ECO:0000255" key="1">
    <source>
        <dbReference type="HAMAP-Rule" id="MF_00693"/>
    </source>
</evidence>
<dbReference type="EMBL" id="CP000786">
    <property type="protein sequence ID" value="ABZ96203.1"/>
    <property type="molecule type" value="Genomic_DNA"/>
</dbReference>
<dbReference type="RefSeq" id="WP_012387093.1">
    <property type="nucleotide sequence ID" value="NC_010602.1"/>
</dbReference>
<dbReference type="SMR" id="B0SJP0"/>
<dbReference type="STRING" id="456481.LEPBI_I0056"/>
<dbReference type="KEGG" id="lbi:LEPBI_I0056"/>
<dbReference type="HOGENOM" id="CLU_062974_2_2_12"/>
<dbReference type="OrthoDB" id="9781053at2"/>
<dbReference type="BioCyc" id="LBIF456481:LEPBI_RS00285-MONOMER"/>
<dbReference type="Proteomes" id="UP000001847">
    <property type="component" value="Chromosome I"/>
</dbReference>
<dbReference type="GO" id="GO:0005829">
    <property type="term" value="C:cytosol"/>
    <property type="evidence" value="ECO:0007669"/>
    <property type="project" value="TreeGrafter"/>
</dbReference>
<dbReference type="GO" id="GO:0003677">
    <property type="term" value="F:DNA binding"/>
    <property type="evidence" value="ECO:0007669"/>
    <property type="project" value="UniProtKB-UniRule"/>
</dbReference>
<dbReference type="GO" id="GO:0006355">
    <property type="term" value="P:regulation of DNA-templated transcription"/>
    <property type="evidence" value="ECO:0007669"/>
    <property type="project" value="UniProtKB-UniRule"/>
</dbReference>
<dbReference type="FunFam" id="1.10.10.200:FF:000002">
    <property type="entry name" value="Probable transcriptional regulatory protein CLM62_37755"/>
    <property type="match status" value="1"/>
</dbReference>
<dbReference type="FunFam" id="3.30.70.980:FF:000002">
    <property type="entry name" value="Probable transcriptional regulatory protein YebC"/>
    <property type="match status" value="1"/>
</dbReference>
<dbReference type="Gene3D" id="1.10.10.200">
    <property type="match status" value="1"/>
</dbReference>
<dbReference type="Gene3D" id="3.30.70.980">
    <property type="match status" value="2"/>
</dbReference>
<dbReference type="HAMAP" id="MF_00693">
    <property type="entry name" value="Transcrip_reg_TACO1"/>
    <property type="match status" value="1"/>
</dbReference>
<dbReference type="InterPro" id="IPR017856">
    <property type="entry name" value="Integrase-like_N"/>
</dbReference>
<dbReference type="InterPro" id="IPR048300">
    <property type="entry name" value="TACO1_YebC-like_2nd/3rd_dom"/>
</dbReference>
<dbReference type="InterPro" id="IPR049083">
    <property type="entry name" value="TACO1_YebC_N"/>
</dbReference>
<dbReference type="InterPro" id="IPR002876">
    <property type="entry name" value="Transcrip_reg_TACO1-like"/>
</dbReference>
<dbReference type="InterPro" id="IPR026564">
    <property type="entry name" value="Transcrip_reg_TACO1-like_dom3"/>
</dbReference>
<dbReference type="InterPro" id="IPR029072">
    <property type="entry name" value="YebC-like"/>
</dbReference>
<dbReference type="NCBIfam" id="NF001030">
    <property type="entry name" value="PRK00110.1"/>
    <property type="match status" value="1"/>
</dbReference>
<dbReference type="NCBIfam" id="NF009044">
    <property type="entry name" value="PRK12378.1"/>
    <property type="match status" value="1"/>
</dbReference>
<dbReference type="NCBIfam" id="TIGR01033">
    <property type="entry name" value="YebC/PmpR family DNA-binding transcriptional regulator"/>
    <property type="match status" value="1"/>
</dbReference>
<dbReference type="PANTHER" id="PTHR12532:SF6">
    <property type="entry name" value="TRANSCRIPTIONAL REGULATORY PROTEIN YEBC-RELATED"/>
    <property type="match status" value="1"/>
</dbReference>
<dbReference type="PANTHER" id="PTHR12532">
    <property type="entry name" value="TRANSLATIONAL ACTIVATOR OF CYTOCHROME C OXIDASE 1"/>
    <property type="match status" value="1"/>
</dbReference>
<dbReference type="Pfam" id="PF20772">
    <property type="entry name" value="TACO1_YebC_N"/>
    <property type="match status" value="1"/>
</dbReference>
<dbReference type="Pfam" id="PF01709">
    <property type="entry name" value="Transcrip_reg"/>
    <property type="match status" value="1"/>
</dbReference>
<dbReference type="SUPFAM" id="SSF75625">
    <property type="entry name" value="YebC-like"/>
    <property type="match status" value="1"/>
</dbReference>
<reference key="1">
    <citation type="journal article" date="2008" name="PLoS ONE">
        <title>Genome sequence of the saprophyte Leptospira biflexa provides insights into the evolution of Leptospira and the pathogenesis of leptospirosis.</title>
        <authorList>
            <person name="Picardeau M."/>
            <person name="Bulach D.M."/>
            <person name="Bouchier C."/>
            <person name="Zuerner R.L."/>
            <person name="Zidane N."/>
            <person name="Wilson P.J."/>
            <person name="Creno S."/>
            <person name="Kuczek E.S."/>
            <person name="Bommezzadri S."/>
            <person name="Davis J.C."/>
            <person name="McGrath A."/>
            <person name="Johnson M.J."/>
            <person name="Boursaux-Eude C."/>
            <person name="Seemann T."/>
            <person name="Rouy Z."/>
            <person name="Coppel R.L."/>
            <person name="Rood J.I."/>
            <person name="Lajus A."/>
            <person name="Davies J.K."/>
            <person name="Medigue C."/>
            <person name="Adler B."/>
        </authorList>
    </citation>
    <scope>NUCLEOTIDE SEQUENCE [LARGE SCALE GENOMIC DNA]</scope>
    <source>
        <strain>Patoc 1 / ATCC 23582 / Paris</strain>
    </source>
</reference>
<name>Y056_LEPBP</name>